<dbReference type="EMBL" id="Z49939">
    <property type="protein sequence ID" value="CAA90208.1"/>
    <property type="molecule type" value="Genomic_DNA"/>
</dbReference>
<dbReference type="EMBL" id="BK006946">
    <property type="protein sequence ID" value="DAA10137.1"/>
    <property type="molecule type" value="Genomic_DNA"/>
</dbReference>
<dbReference type="PIR" id="S57604">
    <property type="entry name" value="S57604"/>
</dbReference>
<dbReference type="RefSeq" id="NP_013964.1">
    <property type="nucleotide sequence ID" value="NM_001182744.1"/>
</dbReference>
<dbReference type="PDB" id="4IN3">
    <property type="method" value="X-ray"/>
    <property type="resolution" value="2.94 A"/>
    <property type="chains" value="B/D=1-724"/>
</dbReference>
<dbReference type="PDB" id="4Q66">
    <property type="method" value="X-ray"/>
    <property type="resolution" value="3.35 A"/>
    <property type="chains" value="B/E/H/K=1-724"/>
</dbReference>
<dbReference type="PDBsum" id="4IN3"/>
<dbReference type="PDBsum" id="4Q66"/>
<dbReference type="SMR" id="Q05029"/>
<dbReference type="BioGRID" id="35415">
    <property type="interactions" value="138"/>
</dbReference>
<dbReference type="ComplexPortal" id="CPX-1719">
    <property type="entry name" value="Exomer complex"/>
</dbReference>
<dbReference type="DIP" id="DIP-2569N"/>
<dbReference type="FunCoup" id="Q05029">
    <property type="interactions" value="87"/>
</dbReference>
<dbReference type="IntAct" id="Q05029">
    <property type="interactions" value="35"/>
</dbReference>
<dbReference type="MINT" id="Q05029"/>
<dbReference type="STRING" id="4932.YMR237W"/>
<dbReference type="iPTMnet" id="Q05029"/>
<dbReference type="PaxDb" id="4932-YMR237W"/>
<dbReference type="PeptideAtlas" id="Q05029"/>
<dbReference type="EnsemblFungi" id="YMR237W_mRNA">
    <property type="protein sequence ID" value="YMR237W"/>
    <property type="gene ID" value="YMR237W"/>
</dbReference>
<dbReference type="GeneID" id="855277"/>
<dbReference type="KEGG" id="sce:YMR237W"/>
<dbReference type="AGR" id="SGD:S000004850"/>
<dbReference type="SGD" id="S000004850">
    <property type="gene designation" value="BCH1"/>
</dbReference>
<dbReference type="VEuPathDB" id="FungiDB:YMR237W"/>
<dbReference type="eggNOG" id="ENOG502QSKI">
    <property type="taxonomic scope" value="Eukaryota"/>
</dbReference>
<dbReference type="GeneTree" id="ENSGT00940000176338"/>
<dbReference type="HOGENOM" id="CLU_019711_0_0_1"/>
<dbReference type="InParanoid" id="Q05029"/>
<dbReference type="OMA" id="IEAYQHC"/>
<dbReference type="OrthoDB" id="434695at2759"/>
<dbReference type="BioCyc" id="YEAST:G3O-32918-MONOMER"/>
<dbReference type="BioGRID-ORCS" id="855277">
    <property type="hits" value="0 hits in 10 CRISPR screens"/>
</dbReference>
<dbReference type="EvolutionaryTrace" id="Q05029"/>
<dbReference type="PRO" id="PR:Q05029"/>
<dbReference type="Proteomes" id="UP000002311">
    <property type="component" value="Chromosome XIII"/>
</dbReference>
<dbReference type="RNAct" id="Q05029">
    <property type="molecule type" value="protein"/>
</dbReference>
<dbReference type="GO" id="GO:0034044">
    <property type="term" value="C:exomer complex"/>
    <property type="evidence" value="ECO:0000314"/>
    <property type="project" value="SGD"/>
</dbReference>
<dbReference type="GO" id="GO:0016020">
    <property type="term" value="C:membrane"/>
    <property type="evidence" value="ECO:0007669"/>
    <property type="project" value="UniProtKB-KW"/>
</dbReference>
<dbReference type="GO" id="GO:0031267">
    <property type="term" value="F:small GTPase binding"/>
    <property type="evidence" value="ECO:0000353"/>
    <property type="project" value="SGD"/>
</dbReference>
<dbReference type="GO" id="GO:0006031">
    <property type="term" value="P:chitin biosynthetic process"/>
    <property type="evidence" value="ECO:0000353"/>
    <property type="project" value="SGD"/>
</dbReference>
<dbReference type="GO" id="GO:0006893">
    <property type="term" value="P:Golgi to plasma membrane transport"/>
    <property type="evidence" value="ECO:0000316"/>
    <property type="project" value="SGD"/>
</dbReference>
<dbReference type="GO" id="GO:0015031">
    <property type="term" value="P:protein transport"/>
    <property type="evidence" value="ECO:0000303"/>
    <property type="project" value="ComplexPortal"/>
</dbReference>
<dbReference type="FunFam" id="1.25.40.10:FF:000476">
    <property type="entry name" value="Bud site selection protein"/>
    <property type="match status" value="1"/>
</dbReference>
<dbReference type="Gene3D" id="1.25.40.10">
    <property type="entry name" value="Tetratricopeptide repeat domain"/>
    <property type="match status" value="1"/>
</dbReference>
<dbReference type="InterPro" id="IPR015374">
    <property type="entry name" value="ChAPs"/>
</dbReference>
<dbReference type="InterPro" id="IPR011990">
    <property type="entry name" value="TPR-like_helical_dom_sf"/>
</dbReference>
<dbReference type="PANTHER" id="PTHR31975">
    <property type="entry name" value="BUD SITE SELECTION PROTEIN 7-RELATED"/>
    <property type="match status" value="1"/>
</dbReference>
<dbReference type="PANTHER" id="PTHR31975:SF1">
    <property type="entry name" value="BUD SITE SELECTION PROTEIN 7-RELATED"/>
    <property type="match status" value="1"/>
</dbReference>
<dbReference type="Pfam" id="PF09295">
    <property type="entry name" value="ChAPs"/>
    <property type="match status" value="1"/>
</dbReference>
<accession>Q05029</accession>
<accession>D6W063</accession>
<comment type="function">
    <text evidence="4 5 6">Member of the CHS5-ARF1P-binding proteins (CHAPS) which mediates export of specific cargo proteins, including chitin synthase CHS3.</text>
</comment>
<comment type="subunit">
    <text evidence="4 5 6">Component of the CHS5/6 complex composed of the 4 CHAPS proteins BCH1, BCH2, BUD7, and CHS6 as well as at least CHS5 and GTP-bound ARF1. The complex interacts with the cargo protein CHS3.</text>
</comment>
<comment type="interaction">
    <interactant intactId="EBI-27508">
        <id>Q05029</id>
    </interactant>
    <interactant intactId="EBI-2816">
        <id>P11076</id>
        <label>ARF1</label>
    </interactant>
    <organismsDiffer>false</organismsDiffer>
    <experiments>3</experiments>
</comment>
<comment type="interaction">
    <interactant intactId="EBI-27508">
        <id>Q05029</id>
    </interactant>
    <interactant intactId="EBI-26374">
        <id>P36122</id>
        <label>BCH2</label>
    </interactant>
    <organismsDiffer>false</organismsDiffer>
    <experiments>5</experiments>
</comment>
<comment type="interaction">
    <interactant intactId="EBI-27508">
        <id>Q05029</id>
    </interactant>
    <interactant intactId="EBI-32770">
        <id>Q08754</id>
        <label>BUD7</label>
    </interactant>
    <organismsDiffer>false</organismsDiffer>
    <experiments>6</experiments>
</comment>
<comment type="interaction">
    <interactant intactId="EBI-27508">
        <id>Q05029</id>
    </interactant>
    <interactant intactId="EBI-4640">
        <id>Q12114</id>
        <label>CHS5</label>
    </interactant>
    <organismsDiffer>false</organismsDiffer>
    <experiments>18</experiments>
</comment>
<comment type="interaction">
    <interactant intactId="EBI-27508">
        <id>Q05029</id>
    </interactant>
    <interactant intactId="EBI-4649">
        <id>P40955</id>
        <label>CHS6</label>
    </interactant>
    <organismsDiffer>false</organismsDiffer>
    <experiments>6</experiments>
</comment>
<comment type="subcellular location">
    <subcellularLocation>
        <location evidence="2 4 6">Golgi apparatus</location>
        <location evidence="2 4 6">trans-Golgi network membrane</location>
        <topology evidence="2 4 6">Peripheral membrane protein</topology>
    </subcellularLocation>
    <text>Trans-Golgi network location requires interaction with CHS5 and with myristoylated GTP-bound ARF1 for the recruitment to the membranes.</text>
</comment>
<comment type="miscellaneous">
    <text evidence="3">Present with 3460 molecules/cell in log phase SD medium.</text>
</comment>
<comment type="similarity">
    <text evidence="7">Belongs to the CHAPS family.</text>
</comment>
<organism>
    <name type="scientific">Saccharomyces cerevisiae (strain ATCC 204508 / S288c)</name>
    <name type="common">Baker's yeast</name>
    <dbReference type="NCBI Taxonomy" id="559292"/>
    <lineage>
        <taxon>Eukaryota</taxon>
        <taxon>Fungi</taxon>
        <taxon>Dikarya</taxon>
        <taxon>Ascomycota</taxon>
        <taxon>Saccharomycotina</taxon>
        <taxon>Saccharomycetes</taxon>
        <taxon>Saccharomycetales</taxon>
        <taxon>Saccharomycetaceae</taxon>
        <taxon>Saccharomyces</taxon>
    </lineage>
</organism>
<evidence type="ECO:0000256" key="1">
    <source>
        <dbReference type="SAM" id="MobiDB-lite"/>
    </source>
</evidence>
<evidence type="ECO:0000269" key="2">
    <source>
    </source>
</evidence>
<evidence type="ECO:0000269" key="3">
    <source>
    </source>
</evidence>
<evidence type="ECO:0000269" key="4">
    <source>
    </source>
</evidence>
<evidence type="ECO:0000269" key="5">
    <source>
    </source>
</evidence>
<evidence type="ECO:0000269" key="6">
    <source>
    </source>
</evidence>
<evidence type="ECO:0000305" key="7"/>
<evidence type="ECO:0007829" key="8">
    <source>
        <dbReference type="PDB" id="4IN3"/>
    </source>
</evidence>
<evidence type="ECO:0007829" key="9">
    <source>
        <dbReference type="PDB" id="4Q66"/>
    </source>
</evidence>
<protein>
    <recommendedName>
        <fullName>Protein BCH1</fullName>
    </recommendedName>
    <alternativeName>
        <fullName>BUD7 and CHS6 homolog 1</fullName>
    </alternativeName>
</protein>
<reference key="1">
    <citation type="journal article" date="1997" name="Nature">
        <title>The nucleotide sequence of Saccharomyces cerevisiae chromosome XIII.</title>
        <authorList>
            <person name="Bowman S."/>
            <person name="Churcher C.M."/>
            <person name="Badcock K."/>
            <person name="Brown D."/>
            <person name="Chillingworth T."/>
            <person name="Connor R."/>
            <person name="Dedman K."/>
            <person name="Devlin K."/>
            <person name="Gentles S."/>
            <person name="Hamlin N."/>
            <person name="Hunt S."/>
            <person name="Jagels K."/>
            <person name="Lye G."/>
            <person name="Moule S."/>
            <person name="Odell C."/>
            <person name="Pearson D."/>
            <person name="Rajandream M.A."/>
            <person name="Rice P."/>
            <person name="Skelton J."/>
            <person name="Walsh S.V."/>
            <person name="Whitehead S."/>
            <person name="Barrell B.G."/>
        </authorList>
    </citation>
    <scope>NUCLEOTIDE SEQUENCE [LARGE SCALE GENOMIC DNA]</scope>
    <source>
        <strain>ATCC 204508 / S288c</strain>
    </source>
</reference>
<reference key="2">
    <citation type="journal article" date="2014" name="G3 (Bethesda)">
        <title>The reference genome sequence of Saccharomyces cerevisiae: Then and now.</title>
        <authorList>
            <person name="Engel S.R."/>
            <person name="Dietrich F.S."/>
            <person name="Fisk D.G."/>
            <person name="Binkley G."/>
            <person name="Balakrishnan R."/>
            <person name="Costanzo M.C."/>
            <person name="Dwight S.S."/>
            <person name="Hitz B.C."/>
            <person name="Karra K."/>
            <person name="Nash R.S."/>
            <person name="Weng S."/>
            <person name="Wong E.D."/>
            <person name="Lloyd P."/>
            <person name="Skrzypek M.S."/>
            <person name="Miyasato S.R."/>
            <person name="Simison M."/>
            <person name="Cherry J.M."/>
        </authorList>
    </citation>
    <scope>GENOME REANNOTATION</scope>
    <source>
        <strain>ATCC 204508 / S288c</strain>
    </source>
</reference>
<reference key="3">
    <citation type="journal article" date="2003" name="Nature">
        <title>Global analysis of protein localization in budding yeast.</title>
        <authorList>
            <person name="Huh W.-K."/>
            <person name="Falvo J.V."/>
            <person name="Gerke L.C."/>
            <person name="Carroll A.S."/>
            <person name="Howson R.W."/>
            <person name="Weissman J.S."/>
            <person name="O'Shea E.K."/>
        </authorList>
    </citation>
    <scope>SUBCELLULAR LOCATION [LARGE SCALE ANALYSIS]</scope>
</reference>
<reference key="4">
    <citation type="journal article" date="2003" name="Nature">
        <title>Global analysis of protein expression in yeast.</title>
        <authorList>
            <person name="Ghaemmaghami S."/>
            <person name="Huh W.-K."/>
            <person name="Bower K."/>
            <person name="Howson R.W."/>
            <person name="Belle A."/>
            <person name="Dephoure N."/>
            <person name="O'Shea E.K."/>
            <person name="Weissman J.S."/>
        </authorList>
    </citation>
    <scope>LEVEL OF PROTEIN EXPRESSION [LARGE SCALE ANALYSIS]</scope>
</reference>
<reference key="5">
    <citation type="journal article" date="2006" name="EMBO J.">
        <title>Arf1p, Chs5p and the ChAPs are required for export of specialized cargo from the Golgi.</title>
        <authorList>
            <person name="Trautwein M."/>
            <person name="Schindler C."/>
            <person name="Gauss R."/>
            <person name="Dengjel J."/>
            <person name="Hartmann E."/>
            <person name="Spang A."/>
        </authorList>
    </citation>
    <scope>FUNCTION</scope>
    <scope>SUBCELLULAR LOCATION</scope>
    <scope>INTERACTION WITH ARF1; BCH2; BUD7; CHS3; CHS5 AND CHS6</scope>
    <scope>DOMAIN</scope>
</reference>
<reference key="6">
    <citation type="journal article" date="2006" name="J. Cell Biol.">
        <title>Exomer: a coat complex for transport of select membrane proteins from the trans-Golgi network to the plasma membrane in yeast.</title>
        <authorList>
            <person name="Wang C.-W."/>
            <person name="Hamamoto S."/>
            <person name="Orci L."/>
            <person name="Schekman R."/>
        </authorList>
    </citation>
    <scope>FUNCTION</scope>
    <scope>IDENTIFICATION IN THE CHS5/6 COMPLEX</scope>
    <scope>INTERACTION WITH ARF1</scope>
    <scope>SUBCELLULAR LOCATION</scope>
</reference>
<reference key="7">
    <citation type="journal article" date="2006" name="Mol. Biol. Cell">
        <title>Chs5/6 complex: a multiprotein complex that interacts with and conveys chitin synthase III from the trans-Golgi network to the cell surface.</title>
        <authorList>
            <person name="Sanchatjate S."/>
            <person name="Schekman R."/>
        </authorList>
    </citation>
    <scope>FUNCTION</scope>
    <scope>IDENTIFICATION IN THE CHS5/6 COMPLEX</scope>
    <scope>INTERACTION WITH CHS3</scope>
</reference>
<reference key="8">
    <citation type="journal article" date="2008" name="Mol. Cell. Proteomics">
        <title>A multidimensional chromatography technology for in-depth phosphoproteome analysis.</title>
        <authorList>
            <person name="Albuquerque C.P."/>
            <person name="Smolka M.B."/>
            <person name="Payne S.H."/>
            <person name="Bafna V."/>
            <person name="Eng J."/>
            <person name="Zhou H."/>
        </authorList>
    </citation>
    <scope>IDENTIFICATION BY MASS SPECTROMETRY [LARGE SCALE ANALYSIS]</scope>
</reference>
<keyword id="KW-0002">3D-structure</keyword>
<keyword id="KW-0333">Golgi apparatus</keyword>
<keyword id="KW-0472">Membrane</keyword>
<keyword id="KW-0653">Protein transport</keyword>
<keyword id="KW-1185">Reference proteome</keyword>
<keyword id="KW-0813">Transport</keyword>
<sequence length="724" mass="82049">MLSQTSIPEVKEDVIGYALHQRRARVGQFQDLGPPDLITLIKSLPSSSSTTTATASANDNGATSNINGQDPTTIVTELHSHDKLKGQIGTFFYCMGIDTSDPTSITIFAKKITDLFLDTPQIWFGKKKHFHVSKISISSWNAFRKYDVNIIVHIPGTVQTYIINSDGEQSQLPSVAEASSGRNSQDLNVNMIWAETFMSGIVRDIMIMKDNRADGESQNLVETLIFNPFTSGELEDVANNFIKLFPLVYEKGVYLDAPTHVLNPSLTNNYLVETLVEIVRLTKSLEACRKMLKKLIEIHPEAVIILIRVYFACDLEIDAVDLINEQLNSPSSFLADDSKTSHIQLIFKSELLSIQSEFLLDVKRDYKLAKEVAMEAVNCAPNEFKTWYLLTRIYIKLNDMSNALLSLNACPMSQVKEKYVLRRIAPITSDENLHLPLPLDASIEEISSLNPMDVQLEQKSADPNLVNLSASSLKSTFQLAYKLLTEIVQITGWEQLLKYRSKIFVMEDEYQGSTSSIDEAEVRGNDISKMRSKRLCERWLDNLFMLLYEDLKTYTDWQSEQLYFDAQNSKYHKLTVEWELFGLCAKRLGHLPEAAKAFQIGLSQRFSPVCAKNLLQFYIDEHKRIRRDSVSANSELTSSQILSSINDIDSSIIDLVVKICCWNHRWYIEFSIILIDALSVAVQDMGITKVHNEIASRFSDPVAQLIDDNILNFLKNFTNDTFDN</sequence>
<feature type="chain" id="PRO_0000203335" description="Protein BCH1">
    <location>
        <begin position="1"/>
        <end position="724"/>
    </location>
</feature>
<feature type="region of interest" description="Disordered" evidence="1">
    <location>
        <begin position="51"/>
        <end position="71"/>
    </location>
</feature>
<feature type="region of interest" description="CHS5-binding">
    <location>
        <begin position="711"/>
        <end position="724"/>
    </location>
</feature>
<feature type="compositionally biased region" description="Low complexity" evidence="1">
    <location>
        <begin position="51"/>
        <end position="65"/>
    </location>
</feature>
<feature type="helix" evidence="8">
    <location>
        <begin position="18"/>
        <end position="25"/>
    </location>
</feature>
<feature type="helix" evidence="8">
    <location>
        <begin position="26"/>
        <end position="28"/>
    </location>
</feature>
<feature type="strand" evidence="8">
    <location>
        <begin position="37"/>
        <end position="43"/>
    </location>
</feature>
<feature type="strand" evidence="9">
    <location>
        <begin position="93"/>
        <end position="95"/>
    </location>
</feature>
<feature type="helix" evidence="8">
    <location>
        <begin position="102"/>
        <end position="115"/>
    </location>
</feature>
<feature type="strand" evidence="9">
    <location>
        <begin position="123"/>
        <end position="125"/>
    </location>
</feature>
<feature type="strand" evidence="8">
    <location>
        <begin position="131"/>
        <end position="134"/>
    </location>
</feature>
<feature type="strand" evidence="8">
    <location>
        <begin position="136"/>
        <end position="141"/>
    </location>
</feature>
<feature type="turn" evidence="8">
    <location>
        <begin position="142"/>
        <end position="145"/>
    </location>
</feature>
<feature type="strand" evidence="8">
    <location>
        <begin position="146"/>
        <end position="151"/>
    </location>
</feature>
<feature type="strand" evidence="8">
    <location>
        <begin position="153"/>
        <end position="155"/>
    </location>
</feature>
<feature type="strand" evidence="8">
    <location>
        <begin position="159"/>
        <end position="163"/>
    </location>
</feature>
<feature type="helix" evidence="8">
    <location>
        <begin position="190"/>
        <end position="206"/>
    </location>
</feature>
<feature type="turn" evidence="8">
    <location>
        <begin position="207"/>
        <end position="215"/>
    </location>
</feature>
<feature type="strand" evidence="9">
    <location>
        <begin position="223"/>
        <end position="225"/>
    </location>
</feature>
<feature type="helix" evidence="8">
    <location>
        <begin position="228"/>
        <end position="230"/>
    </location>
</feature>
<feature type="strand" evidence="8">
    <location>
        <begin position="233"/>
        <end position="235"/>
    </location>
</feature>
<feature type="helix" evidence="8">
    <location>
        <begin position="237"/>
        <end position="243"/>
    </location>
</feature>
<feature type="helix" evidence="8">
    <location>
        <begin position="245"/>
        <end position="248"/>
    </location>
</feature>
<feature type="helix" evidence="8">
    <location>
        <begin position="252"/>
        <end position="255"/>
    </location>
</feature>
<feature type="strand" evidence="8">
    <location>
        <begin position="266"/>
        <end position="269"/>
    </location>
</feature>
<feature type="helix" evidence="8">
    <location>
        <begin position="270"/>
        <end position="282"/>
    </location>
</feature>
<feature type="helix" evidence="8">
    <location>
        <begin position="285"/>
        <end position="298"/>
    </location>
</feature>
<feature type="helix" evidence="8">
    <location>
        <begin position="300"/>
        <end position="302"/>
    </location>
</feature>
<feature type="helix" evidence="8">
    <location>
        <begin position="303"/>
        <end position="312"/>
    </location>
</feature>
<feature type="helix" evidence="8">
    <location>
        <begin position="316"/>
        <end position="328"/>
    </location>
</feature>
<feature type="helix" evidence="8">
    <location>
        <begin position="341"/>
        <end position="361"/>
    </location>
</feature>
<feature type="helix" evidence="8">
    <location>
        <begin position="366"/>
        <end position="379"/>
    </location>
</feature>
<feature type="helix" evidence="8">
    <location>
        <begin position="384"/>
        <end position="397"/>
    </location>
</feature>
<feature type="helix" evidence="8">
    <location>
        <begin position="400"/>
        <end position="408"/>
    </location>
</feature>
<feature type="helix" evidence="8">
    <location>
        <begin position="463"/>
        <end position="466"/>
    </location>
</feature>
<feature type="turn" evidence="8">
    <location>
        <begin position="469"/>
        <end position="472"/>
    </location>
</feature>
<feature type="helix" evidence="8">
    <location>
        <begin position="475"/>
        <end position="491"/>
    </location>
</feature>
<feature type="helix" evidence="8">
    <location>
        <begin position="493"/>
        <end position="503"/>
    </location>
</feature>
<feature type="helix" evidence="8">
    <location>
        <begin position="539"/>
        <end position="564"/>
    </location>
</feature>
<feature type="helix" evidence="8">
    <location>
        <begin position="575"/>
        <end position="588"/>
    </location>
</feature>
<feature type="helix" evidence="8">
    <location>
        <begin position="592"/>
        <end position="601"/>
    </location>
</feature>
<feature type="helix" evidence="8">
    <location>
        <begin position="608"/>
        <end position="630"/>
    </location>
</feature>
<feature type="helix" evidence="8">
    <location>
        <begin position="638"/>
        <end position="665"/>
    </location>
</feature>
<feature type="helix" evidence="8">
    <location>
        <begin position="672"/>
        <end position="684"/>
    </location>
</feature>
<feature type="helix" evidence="8">
    <location>
        <begin position="687"/>
        <end position="697"/>
    </location>
</feature>
<feature type="helix" evidence="8">
    <location>
        <begin position="700"/>
        <end position="709"/>
    </location>
</feature>
<feature type="helix" evidence="8">
    <location>
        <begin position="711"/>
        <end position="716"/>
    </location>
</feature>
<gene>
    <name type="primary">BCH1</name>
    <name type="ordered locus">YMR237W</name>
    <name type="ORF">YM9959.19</name>
</gene>
<proteinExistence type="evidence at protein level"/>
<name>BCH1_YEAST</name>